<comment type="function">
    <text evidence="1">Modulates transcription in response to changes in cellular NADH/NAD(+) redox state.</text>
</comment>
<comment type="subunit">
    <text evidence="1">Homodimer.</text>
</comment>
<comment type="subcellular location">
    <subcellularLocation>
        <location evidence="1">Cytoplasm</location>
    </subcellularLocation>
</comment>
<comment type="similarity">
    <text evidence="1">Belongs to the transcriptional regulatory Rex family.</text>
</comment>
<gene>
    <name evidence="1" type="primary">rex</name>
    <name type="ordered locus">MGAS10750_Spy0993</name>
</gene>
<evidence type="ECO:0000255" key="1">
    <source>
        <dbReference type="HAMAP-Rule" id="MF_01131"/>
    </source>
</evidence>
<feature type="chain" id="PRO_1000065424" description="Redox-sensing transcriptional repressor Rex">
    <location>
        <begin position="1"/>
        <end position="214"/>
    </location>
</feature>
<feature type="DNA-binding region" description="H-T-H motif" evidence="1">
    <location>
        <begin position="17"/>
        <end position="56"/>
    </location>
</feature>
<feature type="binding site" evidence="1">
    <location>
        <begin position="91"/>
        <end position="96"/>
    </location>
    <ligand>
        <name>NAD(+)</name>
        <dbReference type="ChEBI" id="CHEBI:57540"/>
    </ligand>
</feature>
<protein>
    <recommendedName>
        <fullName evidence="1">Redox-sensing transcriptional repressor Rex</fullName>
    </recommendedName>
</protein>
<reference key="1">
    <citation type="journal article" date="2006" name="Proc. Natl. Acad. Sci. U.S.A.">
        <title>Molecular genetic anatomy of inter- and intraserotype variation in the human bacterial pathogen group A Streptococcus.</title>
        <authorList>
            <person name="Beres S.B."/>
            <person name="Richter E.W."/>
            <person name="Nagiec M.J."/>
            <person name="Sumby P."/>
            <person name="Porcella S.F."/>
            <person name="DeLeo F.R."/>
            <person name="Musser J.M."/>
        </authorList>
    </citation>
    <scope>NUCLEOTIDE SEQUENCE [LARGE SCALE GENOMIC DNA]</scope>
    <source>
        <strain>MGAS10750</strain>
    </source>
</reference>
<keyword id="KW-0963">Cytoplasm</keyword>
<keyword id="KW-0238">DNA-binding</keyword>
<keyword id="KW-0520">NAD</keyword>
<keyword id="KW-0678">Repressor</keyword>
<keyword id="KW-0804">Transcription</keyword>
<keyword id="KW-0805">Transcription regulation</keyword>
<proteinExistence type="inferred from homology"/>
<dbReference type="EMBL" id="CP000262">
    <property type="protein sequence ID" value="ABF37943.1"/>
    <property type="molecule type" value="Genomic_DNA"/>
</dbReference>
<dbReference type="SMR" id="Q1J6P0"/>
<dbReference type="KEGG" id="spi:MGAS10750_Spy0993"/>
<dbReference type="HOGENOM" id="CLU_061534_1_1_9"/>
<dbReference type="Proteomes" id="UP000002434">
    <property type="component" value="Chromosome"/>
</dbReference>
<dbReference type="GO" id="GO:0005737">
    <property type="term" value="C:cytoplasm"/>
    <property type="evidence" value="ECO:0007669"/>
    <property type="project" value="UniProtKB-SubCell"/>
</dbReference>
<dbReference type="GO" id="GO:0003677">
    <property type="term" value="F:DNA binding"/>
    <property type="evidence" value="ECO:0007669"/>
    <property type="project" value="UniProtKB-UniRule"/>
</dbReference>
<dbReference type="GO" id="GO:0003700">
    <property type="term" value="F:DNA-binding transcription factor activity"/>
    <property type="evidence" value="ECO:0007669"/>
    <property type="project" value="UniProtKB-UniRule"/>
</dbReference>
<dbReference type="GO" id="GO:0045892">
    <property type="term" value="P:negative regulation of DNA-templated transcription"/>
    <property type="evidence" value="ECO:0007669"/>
    <property type="project" value="InterPro"/>
</dbReference>
<dbReference type="GO" id="GO:0051775">
    <property type="term" value="P:response to redox state"/>
    <property type="evidence" value="ECO:0007669"/>
    <property type="project" value="InterPro"/>
</dbReference>
<dbReference type="Gene3D" id="3.40.50.720">
    <property type="entry name" value="NAD(P)-binding Rossmann-like Domain"/>
    <property type="match status" value="1"/>
</dbReference>
<dbReference type="Gene3D" id="1.10.10.10">
    <property type="entry name" value="Winged helix-like DNA-binding domain superfamily/Winged helix DNA-binding domain"/>
    <property type="match status" value="1"/>
</dbReference>
<dbReference type="HAMAP" id="MF_01131">
    <property type="entry name" value="Rex"/>
    <property type="match status" value="1"/>
</dbReference>
<dbReference type="InterPro" id="IPR003781">
    <property type="entry name" value="CoA-bd"/>
</dbReference>
<dbReference type="InterPro" id="IPR036291">
    <property type="entry name" value="NAD(P)-bd_dom_sf"/>
</dbReference>
<dbReference type="InterPro" id="IPR009718">
    <property type="entry name" value="Rex_DNA-bd_C_dom"/>
</dbReference>
<dbReference type="InterPro" id="IPR022876">
    <property type="entry name" value="Tscrpt_rep_Rex"/>
</dbReference>
<dbReference type="InterPro" id="IPR036388">
    <property type="entry name" value="WH-like_DNA-bd_sf"/>
</dbReference>
<dbReference type="InterPro" id="IPR036390">
    <property type="entry name" value="WH_DNA-bd_sf"/>
</dbReference>
<dbReference type="NCBIfam" id="NF003988">
    <property type="entry name" value="PRK05472.1-1"/>
    <property type="match status" value="1"/>
</dbReference>
<dbReference type="NCBIfam" id="NF003989">
    <property type="entry name" value="PRK05472.1-3"/>
    <property type="match status" value="1"/>
</dbReference>
<dbReference type="NCBIfam" id="NF003991">
    <property type="entry name" value="PRK05472.1-5"/>
    <property type="match status" value="1"/>
</dbReference>
<dbReference type="NCBIfam" id="NF003994">
    <property type="entry name" value="PRK05472.2-3"/>
    <property type="match status" value="1"/>
</dbReference>
<dbReference type="NCBIfam" id="NF003995">
    <property type="entry name" value="PRK05472.2-4"/>
    <property type="match status" value="1"/>
</dbReference>
<dbReference type="NCBIfam" id="NF003996">
    <property type="entry name" value="PRK05472.2-5"/>
    <property type="match status" value="1"/>
</dbReference>
<dbReference type="PANTHER" id="PTHR35786">
    <property type="entry name" value="REDOX-SENSING TRANSCRIPTIONAL REPRESSOR REX"/>
    <property type="match status" value="1"/>
</dbReference>
<dbReference type="PANTHER" id="PTHR35786:SF1">
    <property type="entry name" value="REDOX-SENSING TRANSCRIPTIONAL REPRESSOR REX 1"/>
    <property type="match status" value="1"/>
</dbReference>
<dbReference type="Pfam" id="PF02629">
    <property type="entry name" value="CoA_binding"/>
    <property type="match status" value="1"/>
</dbReference>
<dbReference type="Pfam" id="PF06971">
    <property type="entry name" value="Put_DNA-bind_N"/>
    <property type="match status" value="1"/>
</dbReference>
<dbReference type="SMART" id="SM00881">
    <property type="entry name" value="CoA_binding"/>
    <property type="match status" value="1"/>
</dbReference>
<dbReference type="SUPFAM" id="SSF51735">
    <property type="entry name" value="NAD(P)-binding Rossmann-fold domains"/>
    <property type="match status" value="1"/>
</dbReference>
<dbReference type="SUPFAM" id="SSF46785">
    <property type="entry name" value="Winged helix' DNA-binding domain"/>
    <property type="match status" value="1"/>
</dbReference>
<sequence length="214" mass="23826">MVIDKSIPKATAKRLSLYYRIFKRFHADQVEKASSKQIADAMGIDSATVRRDFSYFGELGRRGFGYDVTKLMNFFADLLNDHSTTNVILVGCGNIGRALLHYRFHDRNKMQIAMGFDTDDNALVGTKTADNIPVHGISSVKERIANTDIETAILTVPSIHAQKVTDQLIEAGIKGILSFAPVHLQVPKGVIVQSVDLTSELQTLLYFMNQNHLD</sequence>
<accession>Q1J6P0</accession>
<name>REX_STRPF</name>
<organism>
    <name type="scientific">Streptococcus pyogenes serotype M4 (strain MGAS10750)</name>
    <dbReference type="NCBI Taxonomy" id="370554"/>
    <lineage>
        <taxon>Bacteria</taxon>
        <taxon>Bacillati</taxon>
        <taxon>Bacillota</taxon>
        <taxon>Bacilli</taxon>
        <taxon>Lactobacillales</taxon>
        <taxon>Streptococcaceae</taxon>
        <taxon>Streptococcus</taxon>
    </lineage>
</organism>